<protein>
    <recommendedName>
        <fullName evidence="1">Large ribosomal subunit protein bL17</fullName>
    </recommendedName>
    <alternativeName>
        <fullName evidence="2">50S ribosomal protein L17</fullName>
    </alternativeName>
</protein>
<organism>
    <name type="scientific">Acinetobacter baylyi (strain ATCC 33305 / BD413 / ADP1)</name>
    <dbReference type="NCBI Taxonomy" id="62977"/>
    <lineage>
        <taxon>Bacteria</taxon>
        <taxon>Pseudomonadati</taxon>
        <taxon>Pseudomonadota</taxon>
        <taxon>Gammaproteobacteria</taxon>
        <taxon>Moraxellales</taxon>
        <taxon>Moraxellaceae</taxon>
        <taxon>Acinetobacter</taxon>
    </lineage>
</organism>
<accession>Q6F7T8</accession>
<sequence length="125" mass="13953">MRHRNSGVKLGRTSSHRKAMFQNLANSLFEHELIKTTVPKAKELRRVAEPLITLAKNDTVANRRLAFARTRSAATVGKLFTVLGPRYKERNGGYLRVLKAGFRAGDAAPMAYVELVDREVNTSAE</sequence>
<feature type="chain" id="PRO_1000055757" description="Large ribosomal subunit protein bL17">
    <location>
        <begin position="1"/>
        <end position="125"/>
    </location>
</feature>
<gene>
    <name evidence="1" type="primary">rplQ</name>
    <name type="ordered locus">ACIAD3193</name>
</gene>
<name>RL17_ACIAD</name>
<keyword id="KW-0687">Ribonucleoprotein</keyword>
<keyword id="KW-0689">Ribosomal protein</keyword>
<reference key="1">
    <citation type="journal article" date="2004" name="Nucleic Acids Res.">
        <title>Unique features revealed by the genome sequence of Acinetobacter sp. ADP1, a versatile and naturally transformation competent bacterium.</title>
        <authorList>
            <person name="Barbe V."/>
            <person name="Vallenet D."/>
            <person name="Fonknechten N."/>
            <person name="Kreimeyer A."/>
            <person name="Oztas S."/>
            <person name="Labarre L."/>
            <person name="Cruveiller S."/>
            <person name="Robert C."/>
            <person name="Duprat S."/>
            <person name="Wincker P."/>
            <person name="Ornston L.N."/>
            <person name="Weissenbach J."/>
            <person name="Marliere P."/>
            <person name="Cohen G.N."/>
            <person name="Medigue C."/>
        </authorList>
    </citation>
    <scope>NUCLEOTIDE SEQUENCE [LARGE SCALE GENOMIC DNA]</scope>
    <source>
        <strain>ATCC 33305 / BD413 / ADP1</strain>
    </source>
</reference>
<evidence type="ECO:0000255" key="1">
    <source>
        <dbReference type="HAMAP-Rule" id="MF_01368"/>
    </source>
</evidence>
<evidence type="ECO:0000305" key="2"/>
<dbReference type="EMBL" id="CR543861">
    <property type="protein sequence ID" value="CAG69877.1"/>
    <property type="molecule type" value="Genomic_DNA"/>
</dbReference>
<dbReference type="RefSeq" id="WP_004924167.1">
    <property type="nucleotide sequence ID" value="NC_005966.1"/>
</dbReference>
<dbReference type="SMR" id="Q6F7T8"/>
<dbReference type="STRING" id="202950.GCA_001485005_02962"/>
<dbReference type="GeneID" id="66211039"/>
<dbReference type="KEGG" id="aci:ACIAD3193"/>
<dbReference type="eggNOG" id="COG0203">
    <property type="taxonomic scope" value="Bacteria"/>
</dbReference>
<dbReference type="HOGENOM" id="CLU_074407_2_0_6"/>
<dbReference type="OrthoDB" id="9809073at2"/>
<dbReference type="BioCyc" id="ASP62977:ACIAD_RS14465-MONOMER"/>
<dbReference type="Proteomes" id="UP000000430">
    <property type="component" value="Chromosome"/>
</dbReference>
<dbReference type="GO" id="GO:0022625">
    <property type="term" value="C:cytosolic large ribosomal subunit"/>
    <property type="evidence" value="ECO:0007669"/>
    <property type="project" value="TreeGrafter"/>
</dbReference>
<dbReference type="GO" id="GO:0003735">
    <property type="term" value="F:structural constituent of ribosome"/>
    <property type="evidence" value="ECO:0007669"/>
    <property type="project" value="InterPro"/>
</dbReference>
<dbReference type="GO" id="GO:0006412">
    <property type="term" value="P:translation"/>
    <property type="evidence" value="ECO:0007669"/>
    <property type="project" value="UniProtKB-UniRule"/>
</dbReference>
<dbReference type="FunFam" id="3.90.1030.10:FF:000001">
    <property type="entry name" value="50S ribosomal protein L17"/>
    <property type="match status" value="1"/>
</dbReference>
<dbReference type="Gene3D" id="3.90.1030.10">
    <property type="entry name" value="Ribosomal protein L17"/>
    <property type="match status" value="1"/>
</dbReference>
<dbReference type="HAMAP" id="MF_01368">
    <property type="entry name" value="Ribosomal_bL17"/>
    <property type="match status" value="1"/>
</dbReference>
<dbReference type="InterPro" id="IPR000456">
    <property type="entry name" value="Ribosomal_bL17"/>
</dbReference>
<dbReference type="InterPro" id="IPR047859">
    <property type="entry name" value="Ribosomal_bL17_CS"/>
</dbReference>
<dbReference type="InterPro" id="IPR036373">
    <property type="entry name" value="Ribosomal_bL17_sf"/>
</dbReference>
<dbReference type="NCBIfam" id="TIGR00059">
    <property type="entry name" value="L17"/>
    <property type="match status" value="1"/>
</dbReference>
<dbReference type="PANTHER" id="PTHR14413:SF16">
    <property type="entry name" value="LARGE RIBOSOMAL SUBUNIT PROTEIN BL17M"/>
    <property type="match status" value="1"/>
</dbReference>
<dbReference type="PANTHER" id="PTHR14413">
    <property type="entry name" value="RIBOSOMAL PROTEIN L17"/>
    <property type="match status" value="1"/>
</dbReference>
<dbReference type="Pfam" id="PF01196">
    <property type="entry name" value="Ribosomal_L17"/>
    <property type="match status" value="1"/>
</dbReference>
<dbReference type="SUPFAM" id="SSF64263">
    <property type="entry name" value="Prokaryotic ribosomal protein L17"/>
    <property type="match status" value="1"/>
</dbReference>
<dbReference type="PROSITE" id="PS01167">
    <property type="entry name" value="RIBOSOMAL_L17"/>
    <property type="match status" value="1"/>
</dbReference>
<proteinExistence type="inferred from homology"/>
<comment type="subunit">
    <text evidence="1">Part of the 50S ribosomal subunit. Contacts protein L32.</text>
</comment>
<comment type="similarity">
    <text evidence="1">Belongs to the bacterial ribosomal protein bL17 family.</text>
</comment>